<proteinExistence type="evidence at protein level"/>
<feature type="transit peptide" description="Mitochondrion" evidence="2">
    <location>
        <begin position="1"/>
        <end position="25"/>
    </location>
</feature>
<feature type="chain" id="PRO_0000458185" description="Succinate dehydrogenase [ubiquinone] flavoprotein subunit 2, mitochondrial" evidence="2">
    <location>
        <begin position="26"/>
        <end position="645"/>
    </location>
</feature>
<feature type="active site" description="Proton acceptor" evidence="3">
    <location>
        <position position="320"/>
    </location>
</feature>
<feature type="binding site" evidence="1">
    <location>
        <position position="49"/>
    </location>
    <ligand>
        <name>FAD</name>
        <dbReference type="ChEBI" id="CHEBI:57692"/>
    </ligand>
</feature>
<feature type="binding site" evidence="1">
    <location>
        <position position="52"/>
    </location>
    <ligand>
        <name>FAD</name>
        <dbReference type="ChEBI" id="CHEBI:57692"/>
    </ligand>
</feature>
<feature type="binding site" evidence="1">
    <location>
        <position position="71"/>
    </location>
    <ligand>
        <name>FAD</name>
        <dbReference type="ChEBI" id="CHEBI:57692"/>
    </ligand>
</feature>
<feature type="binding site" evidence="1">
    <location>
        <position position="72"/>
    </location>
    <ligand>
        <name>FAD</name>
        <dbReference type="ChEBI" id="CHEBI:57692"/>
    </ligand>
</feature>
<feature type="binding site" evidence="1">
    <location>
        <position position="78"/>
    </location>
    <ligand>
        <name>FAD</name>
        <dbReference type="ChEBI" id="CHEBI:57692"/>
    </ligand>
</feature>
<feature type="binding site" evidence="1">
    <location>
        <position position="80"/>
    </location>
    <ligand>
        <name>FAD</name>
        <dbReference type="ChEBI" id="CHEBI:57692"/>
    </ligand>
</feature>
<feature type="binding site" evidence="1">
    <location>
        <position position="84"/>
    </location>
    <ligand>
        <name>FAD</name>
        <dbReference type="ChEBI" id="CHEBI:57692"/>
    </ligand>
</feature>
<feature type="binding site" evidence="1">
    <location>
        <position position="85"/>
    </location>
    <ligand>
        <name>FAD</name>
        <dbReference type="ChEBI" id="CHEBI:57692"/>
    </ligand>
</feature>
<feature type="binding site" evidence="1">
    <location>
        <position position="85"/>
    </location>
    <ligand>
        <name>succinate</name>
        <dbReference type="ChEBI" id="CHEBI:30031"/>
    </ligand>
</feature>
<feature type="binding site" evidence="1">
    <location>
        <position position="86"/>
    </location>
    <ligand>
        <name>FAD</name>
        <dbReference type="ChEBI" id="CHEBI:57692"/>
    </ligand>
</feature>
<feature type="binding site" evidence="1">
    <location>
        <position position="201"/>
    </location>
    <ligand>
        <name>FAD</name>
        <dbReference type="ChEBI" id="CHEBI:57692"/>
    </ligand>
</feature>
<feature type="binding site" evidence="1">
    <location>
        <position position="255"/>
    </location>
    <ligand>
        <name>FAD</name>
        <dbReference type="ChEBI" id="CHEBI:57692"/>
    </ligand>
</feature>
<feature type="binding site" evidence="1">
    <location>
        <position position="276"/>
    </location>
    <ligand>
        <name>succinate</name>
        <dbReference type="ChEBI" id="CHEBI:30031"/>
    </ligand>
</feature>
<feature type="binding site" evidence="1">
    <location>
        <position position="288"/>
    </location>
    <ligand>
        <name>succinate</name>
        <dbReference type="ChEBI" id="CHEBI:30031"/>
    </ligand>
</feature>
<feature type="binding site" evidence="1">
    <location>
        <position position="289"/>
    </location>
    <ligand>
        <name>succinate</name>
        <dbReference type="ChEBI" id="CHEBI:30031"/>
    </ligand>
</feature>
<feature type="binding site" evidence="1">
    <location>
        <position position="387"/>
    </location>
    <ligand>
        <name>succinate</name>
        <dbReference type="ChEBI" id="CHEBI:30031"/>
    </ligand>
</feature>
<feature type="binding site" evidence="1">
    <location>
        <position position="421"/>
    </location>
    <ligand>
        <name>FAD</name>
        <dbReference type="ChEBI" id="CHEBI:57692"/>
    </ligand>
</feature>
<feature type="binding site" evidence="1">
    <location>
        <position position="432"/>
    </location>
    <ligand>
        <name>FAD</name>
        <dbReference type="ChEBI" id="CHEBI:57692"/>
    </ligand>
</feature>
<feature type="binding site" evidence="1">
    <location>
        <position position="432"/>
    </location>
    <ligand>
        <name>succinate</name>
        <dbReference type="ChEBI" id="CHEBI:30031"/>
    </ligand>
</feature>
<feature type="binding site" evidence="1">
    <location>
        <position position="435"/>
    </location>
    <ligand>
        <name>succinate</name>
        <dbReference type="ChEBI" id="CHEBI:30031"/>
    </ligand>
</feature>
<feature type="binding site" evidence="1">
    <location>
        <position position="437"/>
    </location>
    <ligand>
        <name>FAD</name>
        <dbReference type="ChEBI" id="CHEBI:57692"/>
    </ligand>
</feature>
<feature type="binding site" evidence="1">
    <location>
        <position position="438"/>
    </location>
    <ligand>
        <name>FAD</name>
        <dbReference type="ChEBI" id="CHEBI:57692"/>
    </ligand>
</feature>
<feature type="modified residue" description="Tele-8alpha-FAD histidine" evidence="4">
    <location>
        <position position="79"/>
    </location>
</feature>
<comment type="function">
    <text evidence="6 7 8 9">Flavoprotein (Fp) subunit of the mitochondrial electron transport chain complex II which, together with the iron-sulfur protein (Ip) subunit forms the catalytic core of the complex (PubMed:10743611, PubMed:12742584, PubMed:17933581, PubMed:7822332). During the free-living larvae stages, which occur in an aerobic environment, complex II acts as a succinate dehydrogenase by transferring electrons from succinate to ubiquinone (PubMed:10743611, PubMed:12742584, PubMed:7822332).</text>
</comment>
<comment type="catalytic activity">
    <reaction evidence="6 7 8 9">
        <text>a ubiquinone + succinate = a ubiquinol + fumarate</text>
        <dbReference type="Rhea" id="RHEA:13713"/>
        <dbReference type="Rhea" id="RHEA-COMP:9565"/>
        <dbReference type="Rhea" id="RHEA-COMP:9566"/>
        <dbReference type="ChEBI" id="CHEBI:16389"/>
        <dbReference type="ChEBI" id="CHEBI:17976"/>
        <dbReference type="ChEBI" id="CHEBI:29806"/>
        <dbReference type="ChEBI" id="CHEBI:30031"/>
        <dbReference type="EC" id="1.3.5.1"/>
    </reaction>
    <physiologicalReaction direction="left-to-right" evidence="6 7 8 9">
        <dbReference type="Rhea" id="RHEA:13714"/>
    </physiologicalReaction>
</comment>
<comment type="cofactor">
    <cofactor evidence="5">
        <name>FAD</name>
        <dbReference type="ChEBI" id="CHEBI:57692"/>
    </cofactor>
    <text evidence="1">Binds 1 FAD covalently per subunit.</text>
</comment>
<comment type="biophysicochemical properties">
    <kinetics>
        <KM evidence="9">153 uM for succinate (free larvae complex II, at 25 degrees Celsius)</KM>
        <KM evidence="9">3 uM for ubquinone-1 (free larvae complex II, succinate as cosubstrate and at 25 degrees Celsius)</KM>
        <KM evidence="9">455 uM for fumarate (free larvae complex II, at 25 degrees Celsius)</KM>
        <KM evidence="7">28.5 uM for fumarate (free larvae complex II, n-decyl-rhodoquinol as cosubstrate)</KM>
        <KM evidence="7">47.3 uM for n-decyl-rhodoquinol (free larvae complex II, fumarate as cosubstrate)</KM>
        <KM evidence="7">385 uM for succinate (free larvae complex II, n-decyl-ubiquinone as cosubstrate)</KM>
        <KM evidence="7">12 uM for n-decyl-ubiquinone (free larvae complex II, succinate as cosubstrate)</KM>
        <Vmax evidence="7">2.99 umol/min/mg enzyme toward fumarate (free larvae complex II, n-decyl-rhodoquinol as cosubstrate)</Vmax>
        <Vmax evidence="7">7.53 umol/min/mg enzyme toward succinate (free larvae complex II, n-decyl-ubiquinone as cosubstrate)</Vmax>
    </kinetics>
</comment>
<comment type="pathway">
    <text evidence="5 8">Carbohydrate metabolism; tricarboxylic acid cycle; fumarate from succinate (eukaryal route): step 1/1.</text>
</comment>
<comment type="subunit">
    <text evidence="6 7 8 9">Component of the mitochondrial electron transport chain complex II composed of four subunits: a flavoprotein (Fp), an iron-sulfur protein (Ip), and a large cytochrome b (CybL) subunit and a small cytochrome b (CybS) subunit (PubMed:10743611, PubMed:12742584, PubMed:17933581, PubMed:7822332). There are 2 developmental stage-specific forms of complex II which have the Ip and CybL subunits in common (PubMed:10743611, PubMed:12742584, PubMed:17933581, PubMed:7822332). Complex II from the free-living larvae (aerobic environment) acts as a succinate dehydrogenase and is composed of the common subunit Ip and CybL and the stage specific subunits FpL and CybSL (PubMed:12742584, PubMed:17933581, PubMed:7822332). Complex II from parasitic larvae and adults (anaerobic environment) acts as a fumarate reductase and is composed of the common subunit Ip and CybL and the stage specific subunits FpA and CybSA (PubMed:12742584, PubMed:17933581, PubMed:7822332).</text>
</comment>
<comment type="subcellular location">
    <subcellularLocation>
        <location evidence="5 6 7 8 9">Mitochondrion inner membrane</location>
        <topology evidence="5">Peripheral membrane protein</topology>
        <orientation evidence="5">Matrix side</orientation>
    </subcellularLocation>
</comment>
<comment type="tissue specificity">
    <text evidence="6 8">Not expressed in adults (at protein level) (PubMed:10743611). Expressed at very low level in adults (at protein level) (PubMed:17933581).</text>
</comment>
<comment type="developmental stage">
    <text evidence="6 7 8 9">Expressed in L2 larvae (at protein level) (PubMed:10743611, PubMed:12742584, PubMed:17933581, PubMed:7822332). Expressed at low level in lung host L3 larvae (at protein level) (PubMed:17933581).</text>
</comment>
<comment type="similarity">
    <text evidence="5">Belongs to the FAD-dependent oxidoreductase 2 family. FRD/SDH subfamily.</text>
</comment>
<keyword id="KW-0249">Electron transport</keyword>
<keyword id="KW-0274">FAD</keyword>
<keyword id="KW-0285">Flavoprotein</keyword>
<keyword id="KW-0472">Membrane</keyword>
<keyword id="KW-0496">Mitochondrion</keyword>
<keyword id="KW-0999">Mitochondrion inner membrane</keyword>
<keyword id="KW-0560">Oxidoreductase</keyword>
<keyword id="KW-0809">Transit peptide</keyword>
<keyword id="KW-0813">Transport</keyword>
<keyword id="KW-0816">Tricarboxylic acid cycle</keyword>
<keyword id="KW-0830">Ubiquinone</keyword>
<reference evidence="13" key="1">
    <citation type="journal article" date="2002" name="Biochim. Biophys. Acta">
        <title>Role of complex II in anaerobic respiration of the parasite mitochondria from Ascaris suum and Plasmodium falciparum.</title>
        <authorList>
            <person name="Kita K."/>
            <person name="Hirawake H."/>
            <person name="Miyadera H."/>
            <person name="Amino H."/>
            <person name="Takeo S."/>
        </authorList>
    </citation>
    <scope>NUCLEOTIDE SEQUENCE [MRNA]</scope>
</reference>
<reference evidence="12" key="2">
    <citation type="journal article" date="2011" name="Genome Res.">
        <title>Deep small RNA sequencing from the nematode Ascaris reveals conservation, functional diversification, and novel developmental profiles.</title>
        <authorList>
            <person name="Wang J."/>
            <person name="Czech B."/>
            <person name="Crunk A."/>
            <person name="Wallace A."/>
            <person name="Mitreva M."/>
            <person name="Hannon G.J."/>
            <person name="Davis R.E."/>
        </authorList>
    </citation>
    <scope>NUCLEOTIDE SEQUENCE [LARGE SCALE MRNA]</scope>
</reference>
<reference evidence="11" key="3">
    <citation type="journal article" date="1995" name="J. Biol. Chem.">
        <title>Stage-specific isoforms of complex II (succinate-ubiquinone oxidoreductase) in mitochondria from the parasitic nematode, Ascaris suum.</title>
        <authorList>
            <person name="Saruta F."/>
            <person name="Kuramochi T."/>
            <person name="Nakamura K."/>
            <person name="Takamiya S."/>
            <person name="Yu Y."/>
            <person name="Aoki T."/>
            <person name="Sekimizu K."/>
            <person name="Kojima S."/>
            <person name="Kita K."/>
        </authorList>
    </citation>
    <scope>FUNCTION</scope>
    <scope>CATALYTIC ACTIVITY</scope>
    <scope>BIOPHYSICOCHEMICAL PROPERTIES</scope>
    <scope>IDENTIFICATION IN THE MITOCHONDRIAL RESPIRATORY CHAIN COMPLEX II</scope>
    <scope>SUBCELLULAR LOCATION</scope>
    <scope>DEVELOPMENTAL STAGE</scope>
</reference>
<reference evidence="11" key="4">
    <citation type="journal article" date="2000" name="Mol. Biochem. Parasitol.">
        <title>Stage-specific isoforms of Ascaris suum complex. II: The fumarate reductase of the parasitic adult and the succinate dehydrogenase of free-living larvae share a common iron-sulfur subunit.</title>
        <authorList>
            <person name="Amino H."/>
            <person name="Wang H."/>
            <person name="Hirawake H."/>
            <person name="Saruta F."/>
            <person name="Mizuchi D."/>
            <person name="Mineki R."/>
            <person name="Shindo N."/>
            <person name="Murayama K."/>
            <person name="Takamiya S."/>
            <person name="Aoki T."/>
            <person name="Kojima S."/>
            <person name="Kita K."/>
        </authorList>
    </citation>
    <scope>FUNCTION</scope>
    <scope>CATALYTIC ACTIVITY</scope>
    <scope>IDENTIFICATION IN THE MITOCHONDRIAL RESPIRATORY CHAIN COMPLEX II</scope>
    <scope>SUBCELLULAR LOCATION</scope>
    <scope>TISSUE SPECIFICITY</scope>
    <scope>DEVELOPMENTAL STAGE</scope>
</reference>
<reference evidence="11" key="5">
    <citation type="journal article" date="2003" name="Mol. Biochem. Parasitol.">
        <title>Isolation and characterization of the stage-specific cytochrome b small subunit (CybS) of Ascaris suum complex II from the aerobic respiratory chain of larval mitochondria.</title>
        <authorList>
            <person name="Amino H."/>
            <person name="Osanai A."/>
            <person name="Miyadera H."/>
            <person name="Shinjyo N."/>
            <person name="Tomitsuka E."/>
            <person name="Taka H."/>
            <person name="Mineki R."/>
            <person name="Murayama K."/>
            <person name="Takamiya S."/>
            <person name="Aoki T."/>
            <person name="Miyoshi H."/>
            <person name="Sakamoto K."/>
            <person name="Kojima S."/>
            <person name="Kita K."/>
        </authorList>
    </citation>
    <scope>FUNCTION</scope>
    <scope>CATALYTIC ACTIVITY</scope>
    <scope>BIOPHYSICOCHEMICAL PROPERTIES</scope>
    <scope>IDENTIFICATION IN THE MITOCHONDRIAL RESPIRATORY CHAIN COMPLEX II</scope>
    <scope>SUBCELLULAR LOCATION</scope>
    <scope>DEVELOPMENTAL STAGE</scope>
</reference>
<reference evidence="11" key="6">
    <citation type="journal article" date="2008" name="Parasitol. Int.">
        <title>Change of subunit composition of mitochondrial complex II (succinate-ubiquinone reductase/quinol-fumarate reductase) in Ascaris suum during the migration in the experimental host.</title>
        <authorList>
            <person name="Iwata F."/>
            <person name="Shinjyo N."/>
            <person name="Amino H."/>
            <person name="Sakamoto K."/>
            <person name="Islam M.K."/>
            <person name="Tsuji N."/>
            <person name="Kita K."/>
        </authorList>
    </citation>
    <scope>FUNCTION</scope>
    <scope>CATALYTIC ACTIVITY</scope>
    <scope>PATHWAY</scope>
    <scope>IDENTIFICATION IN THE MITOCHONDRIAL RESPIRATORY CHAIN COMPLEX II</scope>
    <scope>SUBCELLULAR LOCATION</scope>
    <scope>TISSUE SPECIFICITY</scope>
    <scope>DEVELOPMENTAL STAGE</scope>
</reference>
<name>SDHA2_ASCSU</name>
<sequence length="645" mass="70512">MLNAARGLAIRLSTRRALSYSGPCCAAKTSNIAEYKVVDHAFDAVVVGAGGAGLRAAMGLSEGGLKTAVITKLFPTRSHTVAAQGGVNAALGNMNPDDWRWHFYDTVKGSDWLGDQDAIHYMTREAVRAVIELENYGMPFSRTADGKIYQRAFGGQSNDFGRGGQAHRTCCVADRTGHSMLHTLYGSSLQYNCQYFIEFFALDLIMDKGACVGVVAMDLEDGTIHRFRSKNTVLATGGYGRAFFSCTSAHTCTGDGTALATRAGIGNSDMEFVQFHPTGIYGAGCLITEGSRGEGGFLVNSKGERFMERYAPNAKDLASRDVVSRAMTVEIMEGRGVGPEKDHIYLQLHHLPVEQLLTRLPGISETAKIFAGVDVAKEPIPVIPTVHYNMGGVPTNYMGQVLKYTRAKGDQLVPGLYAAGEAAAHSVHGANRLGANSLLDLVIFGRACALSILKNTKPGETPPDLPANAGEASIANLDKMRHANGDIPTAELRLQMQKTMQKHAAVFRRGDILAEGVEKMKGLYKDLKHLKTTDRGLVWNSDLIETLELQNLMLNAMQTIVAAENRKESRGAHARDDFPNRIDEYDYSKPLEGQVKKPIDQHWRKHSIIYQEPETGKVTLDYRPVIDKTLDKSETDWVPPKVRSY</sequence>
<gene>
    <name evidence="10" type="primary">SDHA2</name>
</gene>
<evidence type="ECO:0000250" key="1">
    <source>
        <dbReference type="UniProtKB" id="Q33862"/>
    </source>
</evidence>
<evidence type="ECO:0000255" key="2"/>
<evidence type="ECO:0000255" key="3">
    <source>
        <dbReference type="PIRSR" id="PIRSR611281-1"/>
    </source>
</evidence>
<evidence type="ECO:0000255" key="4">
    <source>
        <dbReference type="PIRSR" id="PIRSR611281-4"/>
    </source>
</evidence>
<evidence type="ECO:0000255" key="5">
    <source>
        <dbReference type="RuleBase" id="RU362051"/>
    </source>
</evidence>
<evidence type="ECO:0000269" key="6">
    <source>
    </source>
</evidence>
<evidence type="ECO:0000269" key="7">
    <source>
    </source>
</evidence>
<evidence type="ECO:0000269" key="8">
    <source>
    </source>
</evidence>
<evidence type="ECO:0000269" key="9">
    <source>
    </source>
</evidence>
<evidence type="ECO:0000303" key="10">
    <source>
    </source>
</evidence>
<evidence type="ECO:0000305" key="11"/>
<evidence type="ECO:0000312" key="12">
    <source>
        <dbReference type="EMBL" id="ADY43969.1"/>
    </source>
</evidence>
<evidence type="ECO:0000312" key="13">
    <source>
        <dbReference type="EMBL" id="BAB84191.1"/>
    </source>
</evidence>
<dbReference type="EC" id="1.3.5.1" evidence="5 6 7 8 9"/>
<dbReference type="EMBL" id="JI169558">
    <property type="protein sequence ID" value="ADY43969.1"/>
    <property type="molecule type" value="mRNA"/>
</dbReference>
<dbReference type="EMBL" id="AB071995">
    <property type="protein sequence ID" value="BAB84191.1"/>
    <property type="molecule type" value="mRNA"/>
</dbReference>
<dbReference type="SMR" id="Q8WSR3"/>
<dbReference type="EnsemblMetazoa" id="AgB05_g272_t07">
    <property type="protein sequence ID" value="AgB05_g272_t07"/>
    <property type="gene ID" value="AgB05_g272"/>
</dbReference>
<dbReference type="SABIO-RK" id="Q8WSR3"/>
<dbReference type="UniPathway" id="UPA00223">
    <property type="reaction ID" value="UER01006"/>
</dbReference>
<dbReference type="GO" id="GO:0005743">
    <property type="term" value="C:mitochondrial inner membrane"/>
    <property type="evidence" value="ECO:0007669"/>
    <property type="project" value="UniProtKB-SubCell"/>
</dbReference>
<dbReference type="GO" id="GO:0009055">
    <property type="term" value="F:electron transfer activity"/>
    <property type="evidence" value="ECO:0007669"/>
    <property type="project" value="TreeGrafter"/>
</dbReference>
<dbReference type="GO" id="GO:0050660">
    <property type="term" value="F:flavin adenine dinucleotide binding"/>
    <property type="evidence" value="ECO:0007669"/>
    <property type="project" value="InterPro"/>
</dbReference>
<dbReference type="GO" id="GO:0008177">
    <property type="term" value="F:succinate dehydrogenase (quinone) activity"/>
    <property type="evidence" value="ECO:0007669"/>
    <property type="project" value="UniProtKB-EC"/>
</dbReference>
<dbReference type="GO" id="GO:0006121">
    <property type="term" value="P:mitochondrial electron transport, succinate to ubiquinone"/>
    <property type="evidence" value="ECO:0007669"/>
    <property type="project" value="TreeGrafter"/>
</dbReference>
<dbReference type="GO" id="GO:0006099">
    <property type="term" value="P:tricarboxylic acid cycle"/>
    <property type="evidence" value="ECO:0007669"/>
    <property type="project" value="UniProtKB-UniPathway"/>
</dbReference>
<dbReference type="FunFam" id="3.90.700.10:FF:000001">
    <property type="entry name" value="Mitochondrial succinate dehydrogenase flavoprotein subunit"/>
    <property type="match status" value="1"/>
</dbReference>
<dbReference type="FunFam" id="4.10.80.40:FF:000004">
    <property type="entry name" value="Succinate dehydrogenase [ubiquinone] flavoprotein subunit, mitochondrial"/>
    <property type="match status" value="1"/>
</dbReference>
<dbReference type="FunFam" id="3.50.50.60:FF:000482">
    <property type="entry name" value="Succinate dehydrogenase complex, subunit A, flavoprotein (Fp)"/>
    <property type="match status" value="1"/>
</dbReference>
<dbReference type="FunFam" id="1.20.58.100:FF:000001">
    <property type="entry name" value="Succinate dehydrogenase flavoprotein subunit (SdhA)"/>
    <property type="match status" value="1"/>
</dbReference>
<dbReference type="Gene3D" id="3.50.50.60">
    <property type="entry name" value="FAD/NAD(P)-binding domain"/>
    <property type="match status" value="1"/>
</dbReference>
<dbReference type="Gene3D" id="1.20.58.100">
    <property type="entry name" value="Fumarate reductase/succinate dehydrogenase flavoprotein-like, C-terminal domain"/>
    <property type="match status" value="1"/>
</dbReference>
<dbReference type="Gene3D" id="4.10.80.40">
    <property type="entry name" value="succinate dehydrogenase protein domain"/>
    <property type="match status" value="1"/>
</dbReference>
<dbReference type="Gene3D" id="3.90.700.10">
    <property type="entry name" value="Succinate dehydrogenase/fumarate reductase flavoprotein, catalytic domain"/>
    <property type="match status" value="1"/>
</dbReference>
<dbReference type="InterPro" id="IPR003953">
    <property type="entry name" value="FAD-dep_OxRdtase_2_FAD-bd"/>
</dbReference>
<dbReference type="InterPro" id="IPR036188">
    <property type="entry name" value="FAD/NAD-bd_sf"/>
</dbReference>
<dbReference type="InterPro" id="IPR003952">
    <property type="entry name" value="FRD_SDH_FAD_BS"/>
</dbReference>
<dbReference type="InterPro" id="IPR037099">
    <property type="entry name" value="Fum_R/Succ_DH_flav-like_C_sf"/>
</dbReference>
<dbReference type="InterPro" id="IPR015939">
    <property type="entry name" value="Fum_Rdtase/Succ_DH_flav-like_C"/>
</dbReference>
<dbReference type="InterPro" id="IPR030664">
    <property type="entry name" value="SdhA/FrdA/AprA"/>
</dbReference>
<dbReference type="InterPro" id="IPR027477">
    <property type="entry name" value="Succ_DH/fumarate_Rdtase_cat_sf"/>
</dbReference>
<dbReference type="InterPro" id="IPR011281">
    <property type="entry name" value="Succ_DH_flav_su_fwd"/>
</dbReference>
<dbReference type="InterPro" id="IPR014006">
    <property type="entry name" value="Succ_Dhase_FrdA_Gneg"/>
</dbReference>
<dbReference type="NCBIfam" id="TIGR01816">
    <property type="entry name" value="sdhA_forward"/>
    <property type="match status" value="1"/>
</dbReference>
<dbReference type="NCBIfam" id="TIGR01812">
    <property type="entry name" value="sdhA_frdA_Gneg"/>
    <property type="match status" value="1"/>
</dbReference>
<dbReference type="PANTHER" id="PTHR11632">
    <property type="entry name" value="SUCCINATE DEHYDROGENASE 2 FLAVOPROTEIN SUBUNIT"/>
    <property type="match status" value="1"/>
</dbReference>
<dbReference type="PANTHER" id="PTHR11632:SF51">
    <property type="entry name" value="SUCCINATE DEHYDROGENASE [UBIQUINONE] FLAVOPROTEIN SUBUNIT, MITOCHONDRIAL"/>
    <property type="match status" value="1"/>
</dbReference>
<dbReference type="Pfam" id="PF00890">
    <property type="entry name" value="FAD_binding_2"/>
    <property type="match status" value="1"/>
</dbReference>
<dbReference type="Pfam" id="PF02910">
    <property type="entry name" value="Succ_DH_flav_C"/>
    <property type="match status" value="1"/>
</dbReference>
<dbReference type="PIRSF" id="PIRSF000171">
    <property type="entry name" value="SDHA_APRA_LASPO"/>
    <property type="match status" value="1"/>
</dbReference>
<dbReference type="SUPFAM" id="SSF51905">
    <property type="entry name" value="FAD/NAD(P)-binding domain"/>
    <property type="match status" value="1"/>
</dbReference>
<dbReference type="SUPFAM" id="SSF46977">
    <property type="entry name" value="Succinate dehydrogenase/fumarate reductase flavoprotein C-terminal domain"/>
    <property type="match status" value="1"/>
</dbReference>
<dbReference type="SUPFAM" id="SSF56425">
    <property type="entry name" value="Succinate dehydrogenase/fumarate reductase flavoprotein, catalytic domain"/>
    <property type="match status" value="1"/>
</dbReference>
<dbReference type="PROSITE" id="PS00504">
    <property type="entry name" value="FRD_SDH_FAD_BINDING"/>
    <property type="match status" value="1"/>
</dbReference>
<organism evidence="13">
    <name type="scientific">Ascaris suum</name>
    <name type="common">Pig roundworm</name>
    <name type="synonym">Ascaris lumbricoides</name>
    <dbReference type="NCBI Taxonomy" id="6253"/>
    <lineage>
        <taxon>Eukaryota</taxon>
        <taxon>Metazoa</taxon>
        <taxon>Ecdysozoa</taxon>
        <taxon>Nematoda</taxon>
        <taxon>Chromadorea</taxon>
        <taxon>Rhabditida</taxon>
        <taxon>Spirurina</taxon>
        <taxon>Ascaridomorpha</taxon>
        <taxon>Ascaridoidea</taxon>
        <taxon>Ascarididae</taxon>
        <taxon>Ascaris</taxon>
    </lineage>
</organism>
<accession>Q8WSR3</accession>
<protein>
    <recommendedName>
        <fullName evidence="5">Succinate dehydrogenase [ubiquinone] flavoprotein subunit 2, mitochondrial</fullName>
        <shortName evidence="11">FpL</shortName>
        <ecNumber evidence="5 6 7 8 9">1.3.5.1</ecNumber>
    </recommendedName>
</protein>